<keyword id="KW-0378">Hydrolase</keyword>
<keyword id="KW-0663">Pyridoxal phosphate</keyword>
<comment type="function">
    <text evidence="1">Catalyzes a cyclopropane ring-opening reaction, the irreversible conversion of 1-aminocyclopropane-1-carboxylate (ACC) to ammonia and alpha-ketobutyrate. Allows growth on ACC as a nitrogen source.</text>
</comment>
<comment type="catalytic activity">
    <reaction evidence="1">
        <text>1-aminocyclopropane-1-carboxylate + H2O = 2-oxobutanoate + NH4(+)</text>
        <dbReference type="Rhea" id="RHEA:16933"/>
        <dbReference type="ChEBI" id="CHEBI:15377"/>
        <dbReference type="ChEBI" id="CHEBI:16763"/>
        <dbReference type="ChEBI" id="CHEBI:28938"/>
        <dbReference type="ChEBI" id="CHEBI:58360"/>
        <dbReference type="EC" id="3.5.99.7"/>
    </reaction>
</comment>
<comment type="cofactor">
    <cofactor evidence="1">
        <name>pyridoxal 5'-phosphate</name>
        <dbReference type="ChEBI" id="CHEBI:597326"/>
    </cofactor>
</comment>
<comment type="subunit">
    <text evidence="1">Homotrimer.</text>
</comment>
<comment type="similarity">
    <text evidence="1">Belongs to the ACC deaminase/D-cysteine desulfhydrase family.</text>
</comment>
<dbReference type="EC" id="3.5.99.7" evidence="1"/>
<dbReference type="EMBL" id="CP000959">
    <property type="protein sequence ID" value="ACA93293.1"/>
    <property type="molecule type" value="Genomic_DNA"/>
</dbReference>
<dbReference type="RefSeq" id="WP_012338834.1">
    <property type="nucleotide sequence ID" value="NC_010515.1"/>
</dbReference>
<dbReference type="SMR" id="B1K774"/>
<dbReference type="GeneID" id="83050906"/>
<dbReference type="KEGG" id="bcm:Bcenmc03_4142"/>
<dbReference type="HOGENOM" id="CLU_048897_2_1_4"/>
<dbReference type="Proteomes" id="UP000002169">
    <property type="component" value="Chromosome 2"/>
</dbReference>
<dbReference type="GO" id="GO:0008660">
    <property type="term" value="F:1-aminocyclopropane-1-carboxylate deaminase activity"/>
    <property type="evidence" value="ECO:0007669"/>
    <property type="project" value="UniProtKB-UniRule"/>
</dbReference>
<dbReference type="GO" id="GO:0019148">
    <property type="term" value="F:D-cysteine desulfhydrase activity"/>
    <property type="evidence" value="ECO:0007669"/>
    <property type="project" value="TreeGrafter"/>
</dbReference>
<dbReference type="GO" id="GO:0030170">
    <property type="term" value="F:pyridoxal phosphate binding"/>
    <property type="evidence" value="ECO:0007669"/>
    <property type="project" value="InterPro"/>
</dbReference>
<dbReference type="GO" id="GO:0018871">
    <property type="term" value="P:1-aminocyclopropane-1-carboxylate metabolic process"/>
    <property type="evidence" value="ECO:0007669"/>
    <property type="project" value="UniProtKB-UniRule"/>
</dbReference>
<dbReference type="GO" id="GO:0009310">
    <property type="term" value="P:amine catabolic process"/>
    <property type="evidence" value="ECO:0007669"/>
    <property type="project" value="InterPro"/>
</dbReference>
<dbReference type="CDD" id="cd06449">
    <property type="entry name" value="ACCD"/>
    <property type="match status" value="1"/>
</dbReference>
<dbReference type="FunFam" id="3.40.50.1100:FF:000048">
    <property type="entry name" value="1-aminocyclopropane-1-carboxylate deaminase"/>
    <property type="match status" value="1"/>
</dbReference>
<dbReference type="Gene3D" id="3.40.50.1100">
    <property type="match status" value="2"/>
</dbReference>
<dbReference type="HAMAP" id="MF_00807">
    <property type="entry name" value="ACC_deaminase"/>
    <property type="match status" value="1"/>
</dbReference>
<dbReference type="InterPro" id="IPR027278">
    <property type="entry name" value="ACCD_DCysDesulf"/>
</dbReference>
<dbReference type="InterPro" id="IPR005965">
    <property type="entry name" value="ACP_carboxylate_deaminase"/>
</dbReference>
<dbReference type="InterPro" id="IPR020601">
    <property type="entry name" value="ACP_carboxylate_deaminase_bac"/>
</dbReference>
<dbReference type="InterPro" id="IPR001926">
    <property type="entry name" value="TrpB-like_PALP"/>
</dbReference>
<dbReference type="InterPro" id="IPR036052">
    <property type="entry name" value="TrpB-like_PALP_sf"/>
</dbReference>
<dbReference type="NCBIfam" id="TIGR01274">
    <property type="entry name" value="ACC_deam"/>
    <property type="match status" value="1"/>
</dbReference>
<dbReference type="PANTHER" id="PTHR43780">
    <property type="entry name" value="1-AMINOCYCLOPROPANE-1-CARBOXYLATE DEAMINASE-RELATED"/>
    <property type="match status" value="1"/>
</dbReference>
<dbReference type="PANTHER" id="PTHR43780:SF2">
    <property type="entry name" value="1-AMINOCYCLOPROPANE-1-CARBOXYLATE DEAMINASE-RELATED"/>
    <property type="match status" value="1"/>
</dbReference>
<dbReference type="Pfam" id="PF00291">
    <property type="entry name" value="PALP"/>
    <property type="match status" value="1"/>
</dbReference>
<dbReference type="PIRSF" id="PIRSF006278">
    <property type="entry name" value="ACCD_DCysDesulf"/>
    <property type="match status" value="1"/>
</dbReference>
<dbReference type="SUPFAM" id="SSF53686">
    <property type="entry name" value="Tryptophan synthase beta subunit-like PLP-dependent enzymes"/>
    <property type="match status" value="1"/>
</dbReference>
<reference key="1">
    <citation type="submission" date="2008-02" db="EMBL/GenBank/DDBJ databases">
        <title>Complete sequence of chromosome 2 of Burkholderia cenocepacia MC0-3.</title>
        <authorList>
            <person name="Copeland A."/>
            <person name="Lucas S."/>
            <person name="Lapidus A."/>
            <person name="Barry K."/>
            <person name="Bruce D."/>
            <person name="Goodwin L."/>
            <person name="Glavina del Rio T."/>
            <person name="Dalin E."/>
            <person name="Tice H."/>
            <person name="Pitluck S."/>
            <person name="Chain P."/>
            <person name="Malfatti S."/>
            <person name="Shin M."/>
            <person name="Vergez L."/>
            <person name="Schmutz J."/>
            <person name="Larimer F."/>
            <person name="Land M."/>
            <person name="Hauser L."/>
            <person name="Kyrpides N."/>
            <person name="Mikhailova N."/>
            <person name="Tiedje J."/>
            <person name="Richardson P."/>
        </authorList>
    </citation>
    <scope>NUCLEOTIDE SEQUENCE [LARGE SCALE GENOMIC DNA]</scope>
    <source>
        <strain>MC0-3</strain>
    </source>
</reference>
<gene>
    <name evidence="1" type="primary">acdS</name>
    <name type="ordered locus">Bcenmc03_4142</name>
</gene>
<organism>
    <name type="scientific">Burkholderia orbicola (strain MC0-3)</name>
    <dbReference type="NCBI Taxonomy" id="406425"/>
    <lineage>
        <taxon>Bacteria</taxon>
        <taxon>Pseudomonadati</taxon>
        <taxon>Pseudomonadota</taxon>
        <taxon>Betaproteobacteria</taxon>
        <taxon>Burkholderiales</taxon>
        <taxon>Burkholderiaceae</taxon>
        <taxon>Burkholderia</taxon>
        <taxon>Burkholderia cepacia complex</taxon>
        <taxon>Burkholderia orbicola</taxon>
    </lineage>
</organism>
<protein>
    <recommendedName>
        <fullName evidence="1">1-aminocyclopropane-1-carboxylate deaminase</fullName>
        <shortName evidence="1">ACC deaminase</shortName>
        <shortName evidence="1">ACCD</shortName>
        <ecNumber evidence="1">3.5.99.7</ecNumber>
    </recommendedName>
</protein>
<feature type="chain" id="PRO_1000134008" description="1-aminocyclopropane-1-carboxylate deaminase">
    <location>
        <begin position="1"/>
        <end position="338"/>
    </location>
</feature>
<feature type="active site" description="Nucleophile" evidence="1">
    <location>
        <position position="78"/>
    </location>
</feature>
<feature type="modified residue" description="N6-(pyridoxal phosphate)lysine" evidence="1">
    <location>
        <position position="51"/>
    </location>
</feature>
<sequence length="338" mass="36641">MNLQRFPRYPLTFGPTPIQPLKRLSAHLGGKVELYAKREDCNSGLAFGGNKTRKLEYLVPDALAQGADTLVSIGGVQSNQTRQVAAVAAHLGMKCVLVQEHWVNYEDPVYDRVGNIQLSRMMGADVRLVSDGFDIGIRRSWEEAMESVRQAGGKPYPIPAGCSEHPLGGLGFVGFAEEVRAQEAQLGFKFDYVVVCSVTGSTQAGMVVGFAADGRADRVIGIDASAKPEQTREQITRIARHTAELVELGRDIVEQDVVLDTRYGGPEYGLPSDGTLEAIRLCARLEGMLTDPVYEGKSMHGMIDKVRLGEFEPGSKVLYAHLGGAPALSAYNGIFRNG</sequence>
<name>1A1D_BURO0</name>
<proteinExistence type="inferred from homology"/>
<accession>B1K774</accession>
<evidence type="ECO:0000255" key="1">
    <source>
        <dbReference type="HAMAP-Rule" id="MF_00807"/>
    </source>
</evidence>